<accession>B1IZY5</accession>
<gene>
    <name evidence="1" type="primary">dcyD</name>
    <name type="ordered locus">EcolC_1720</name>
</gene>
<evidence type="ECO:0000255" key="1">
    <source>
        <dbReference type="HAMAP-Rule" id="MF_01045"/>
    </source>
</evidence>
<protein>
    <recommendedName>
        <fullName evidence="1">D-cysteine desulfhydrase</fullName>
        <ecNumber evidence="1">4.4.1.15</ecNumber>
    </recommendedName>
</protein>
<keyword id="KW-0456">Lyase</keyword>
<keyword id="KW-0663">Pyridoxal phosphate</keyword>
<proteinExistence type="inferred from homology"/>
<dbReference type="EC" id="4.4.1.15" evidence="1"/>
<dbReference type="EMBL" id="CP000946">
    <property type="protein sequence ID" value="ACA77370.1"/>
    <property type="molecule type" value="Genomic_DNA"/>
</dbReference>
<dbReference type="RefSeq" id="WP_001128215.1">
    <property type="nucleotide sequence ID" value="NZ_MTFT01000011.1"/>
</dbReference>
<dbReference type="SMR" id="B1IZY5"/>
<dbReference type="GeneID" id="75205835"/>
<dbReference type="KEGG" id="ecl:EcolC_1720"/>
<dbReference type="HOGENOM" id="CLU_048897_1_0_6"/>
<dbReference type="GO" id="GO:0019148">
    <property type="term" value="F:D-cysteine desulfhydrase activity"/>
    <property type="evidence" value="ECO:0007669"/>
    <property type="project" value="UniProtKB-UniRule"/>
</dbReference>
<dbReference type="GO" id="GO:0046416">
    <property type="term" value="P:D-amino acid metabolic process"/>
    <property type="evidence" value="ECO:0007669"/>
    <property type="project" value="UniProtKB-UniRule"/>
</dbReference>
<dbReference type="CDD" id="cd06449">
    <property type="entry name" value="ACCD"/>
    <property type="match status" value="1"/>
</dbReference>
<dbReference type="FunFam" id="3.40.50.1100:FF:000019">
    <property type="entry name" value="D-cysteine desulfhydrase"/>
    <property type="match status" value="1"/>
</dbReference>
<dbReference type="Gene3D" id="3.40.50.1100">
    <property type="match status" value="2"/>
</dbReference>
<dbReference type="HAMAP" id="MF_01045">
    <property type="entry name" value="D_Cys_desulfhydr"/>
    <property type="match status" value="1"/>
</dbReference>
<dbReference type="InterPro" id="IPR027278">
    <property type="entry name" value="ACCD_DCysDesulf"/>
</dbReference>
<dbReference type="InterPro" id="IPR005966">
    <property type="entry name" value="D-Cys_desShydrase"/>
</dbReference>
<dbReference type="InterPro" id="IPR023702">
    <property type="entry name" value="D_Cys_desulphydr_bac"/>
</dbReference>
<dbReference type="InterPro" id="IPR001926">
    <property type="entry name" value="TrpB-like_PALP"/>
</dbReference>
<dbReference type="InterPro" id="IPR036052">
    <property type="entry name" value="TrpB-like_PALP_sf"/>
</dbReference>
<dbReference type="NCBIfam" id="TIGR01275">
    <property type="entry name" value="ACC_deam_rel"/>
    <property type="match status" value="1"/>
</dbReference>
<dbReference type="NCBIfam" id="NF003029">
    <property type="entry name" value="PRK03910.1-1"/>
    <property type="match status" value="1"/>
</dbReference>
<dbReference type="NCBIfam" id="NF003030">
    <property type="entry name" value="PRK03910.1-3"/>
    <property type="match status" value="1"/>
</dbReference>
<dbReference type="NCBIfam" id="NF003032">
    <property type="entry name" value="PRK03910.1-5"/>
    <property type="match status" value="1"/>
</dbReference>
<dbReference type="PANTHER" id="PTHR43780">
    <property type="entry name" value="1-AMINOCYCLOPROPANE-1-CARBOXYLATE DEAMINASE-RELATED"/>
    <property type="match status" value="1"/>
</dbReference>
<dbReference type="PANTHER" id="PTHR43780:SF2">
    <property type="entry name" value="1-AMINOCYCLOPROPANE-1-CARBOXYLATE DEAMINASE-RELATED"/>
    <property type="match status" value="1"/>
</dbReference>
<dbReference type="Pfam" id="PF00291">
    <property type="entry name" value="PALP"/>
    <property type="match status" value="1"/>
</dbReference>
<dbReference type="PIRSF" id="PIRSF006278">
    <property type="entry name" value="ACCD_DCysDesulf"/>
    <property type="match status" value="1"/>
</dbReference>
<dbReference type="SUPFAM" id="SSF53686">
    <property type="entry name" value="Tryptophan synthase beta subunit-like PLP-dependent enzymes"/>
    <property type="match status" value="1"/>
</dbReference>
<name>DCYD_ECOLC</name>
<sequence>MPLHNLTRFPRLEFIGAPTPLEYLPRFSDYLGREIFIKRDDVTPMAMGGNKLRKLEFLAADALREGADTLITAGAIQSNHVRQTAAVAAKLGLHCVALLENPIGTTAENYLTNGNRLLLDLFNTQIEMCDALTDPNAQLEELATRVEAQGFRPYVIPVGGSNALGALGYVESALEIAQQCEGAVNISSVVVASGSAGTHAGLAVGLEHLMPESELIGVTVSRSVADQLPKVVNLQQAIAKELELTASAEILLWDDYFAPGYGVPNDEGMEAVKLLARLEGILLDPVYTGKAMAGLIDGISQKRFKDEGPILFIHTGGAPALFAYHPHV</sequence>
<organism>
    <name type="scientific">Escherichia coli (strain ATCC 8739 / DSM 1576 / NBRC 3972 / NCIMB 8545 / WDCM 00012 / Crooks)</name>
    <dbReference type="NCBI Taxonomy" id="481805"/>
    <lineage>
        <taxon>Bacteria</taxon>
        <taxon>Pseudomonadati</taxon>
        <taxon>Pseudomonadota</taxon>
        <taxon>Gammaproteobacteria</taxon>
        <taxon>Enterobacterales</taxon>
        <taxon>Enterobacteriaceae</taxon>
        <taxon>Escherichia</taxon>
    </lineage>
</organism>
<reference key="1">
    <citation type="submission" date="2008-02" db="EMBL/GenBank/DDBJ databases">
        <title>Complete sequence of Escherichia coli C str. ATCC 8739.</title>
        <authorList>
            <person name="Copeland A."/>
            <person name="Lucas S."/>
            <person name="Lapidus A."/>
            <person name="Glavina del Rio T."/>
            <person name="Dalin E."/>
            <person name="Tice H."/>
            <person name="Bruce D."/>
            <person name="Goodwin L."/>
            <person name="Pitluck S."/>
            <person name="Kiss H."/>
            <person name="Brettin T."/>
            <person name="Detter J.C."/>
            <person name="Han C."/>
            <person name="Kuske C.R."/>
            <person name="Schmutz J."/>
            <person name="Larimer F."/>
            <person name="Land M."/>
            <person name="Hauser L."/>
            <person name="Kyrpides N."/>
            <person name="Mikhailova N."/>
            <person name="Ingram L."/>
            <person name="Richardson P."/>
        </authorList>
    </citation>
    <scope>NUCLEOTIDE SEQUENCE [LARGE SCALE GENOMIC DNA]</scope>
    <source>
        <strain>ATCC 8739 / DSM 1576 / NBRC 3972 / NCIMB 8545 / WDCM 00012 / Crooks</strain>
    </source>
</reference>
<feature type="chain" id="PRO_1000084407" description="D-cysteine desulfhydrase">
    <location>
        <begin position="1"/>
        <end position="328"/>
    </location>
</feature>
<feature type="modified residue" description="N6-(pyridoxal phosphate)lysine" evidence="1">
    <location>
        <position position="51"/>
    </location>
</feature>
<comment type="function">
    <text evidence="1">Catalyzes the alpha,beta-elimination reaction of D-cysteine and of several D-cysteine derivatives. It could be a defense mechanism against D-cysteine.</text>
</comment>
<comment type="catalytic activity">
    <reaction evidence="1">
        <text>D-cysteine + H2O = hydrogen sulfide + pyruvate + NH4(+) + H(+)</text>
        <dbReference type="Rhea" id="RHEA:11268"/>
        <dbReference type="ChEBI" id="CHEBI:15361"/>
        <dbReference type="ChEBI" id="CHEBI:15377"/>
        <dbReference type="ChEBI" id="CHEBI:15378"/>
        <dbReference type="ChEBI" id="CHEBI:28938"/>
        <dbReference type="ChEBI" id="CHEBI:29919"/>
        <dbReference type="ChEBI" id="CHEBI:35236"/>
        <dbReference type="EC" id="4.4.1.15"/>
    </reaction>
</comment>
<comment type="cofactor">
    <cofactor evidence="1">
        <name>pyridoxal 5'-phosphate</name>
        <dbReference type="ChEBI" id="CHEBI:597326"/>
    </cofactor>
</comment>
<comment type="subunit">
    <text evidence="1">Homodimer.</text>
</comment>
<comment type="similarity">
    <text evidence="1">Belongs to the ACC deaminase/D-cysteine desulfhydrase family.</text>
</comment>